<organism>
    <name type="scientific">Geotalea uraniireducens (strain Rf4)</name>
    <name type="common">Geobacter uraniireducens</name>
    <dbReference type="NCBI Taxonomy" id="351605"/>
    <lineage>
        <taxon>Bacteria</taxon>
        <taxon>Pseudomonadati</taxon>
        <taxon>Thermodesulfobacteriota</taxon>
        <taxon>Desulfuromonadia</taxon>
        <taxon>Geobacterales</taxon>
        <taxon>Geobacteraceae</taxon>
        <taxon>Geotalea</taxon>
    </lineage>
</organism>
<sequence length="440" mass="48378">MRLSEHIYRTISSIRGPLLFVERVFNARAGEIVRIVHPDGETVDGEVLKIEGETVLIQVFGETRGLGMDAPVAFTDGVKMAPLSPDMIGRVFDGSFHPIDGSPLFVPERWTPATGQPINPTARARPEEFIETGITAIDALNTLVKGQKLPVFSCAGLPSREVAAAVLQNARLAGGGEFVVVFVALGLTHHDYSFYMESLAEMKTGFVAFVNRADEPVVERLLAPRFGLAAAEFLAFNRGMDVLVLITDMTNYCDALREVSTAREELPGRRGYPGYMYSDLASLYERAGRIKGMAGSVTMLPVVTMPEDDITHPIPDLTGYITEGQIVLSRELHQKGVFPPVDVLPSLSRLMQRGIGAGHTRSDHRAIADRLYRHYAKGRDLRRLEAIVGREGMTAGDRVMLDFADAFERELIHQGSARRDINGSLDRGVELLKRFSLEAA</sequence>
<keyword id="KW-0066">ATP synthesis</keyword>
<keyword id="KW-0375">Hydrogen ion transport</keyword>
<keyword id="KW-0406">Ion transport</keyword>
<keyword id="KW-1185">Reference proteome</keyword>
<keyword id="KW-0813">Transport</keyword>
<protein>
    <recommendedName>
        <fullName evidence="1">V-type ATP synthase beta chain</fullName>
    </recommendedName>
    <alternativeName>
        <fullName evidence="1">V-ATPase subunit B</fullName>
    </alternativeName>
</protein>
<proteinExistence type="inferred from homology"/>
<name>VATB_GEOUR</name>
<evidence type="ECO:0000255" key="1">
    <source>
        <dbReference type="HAMAP-Rule" id="MF_00310"/>
    </source>
</evidence>
<reference key="1">
    <citation type="submission" date="2007-05" db="EMBL/GenBank/DDBJ databases">
        <title>Complete sequence of Geobacter uraniireducens Rf4.</title>
        <authorList>
            <consortium name="US DOE Joint Genome Institute"/>
            <person name="Copeland A."/>
            <person name="Lucas S."/>
            <person name="Lapidus A."/>
            <person name="Barry K."/>
            <person name="Detter J.C."/>
            <person name="Glavina del Rio T."/>
            <person name="Hammon N."/>
            <person name="Israni S."/>
            <person name="Dalin E."/>
            <person name="Tice H."/>
            <person name="Pitluck S."/>
            <person name="Chertkov O."/>
            <person name="Brettin T."/>
            <person name="Bruce D."/>
            <person name="Han C."/>
            <person name="Schmutz J."/>
            <person name="Larimer F."/>
            <person name="Land M."/>
            <person name="Hauser L."/>
            <person name="Kyrpides N."/>
            <person name="Mikhailova N."/>
            <person name="Shelobolina E."/>
            <person name="Aklujkar M."/>
            <person name="Lovley D."/>
            <person name="Richardson P."/>
        </authorList>
    </citation>
    <scope>NUCLEOTIDE SEQUENCE [LARGE SCALE GENOMIC DNA]</scope>
    <source>
        <strain>ATCC BAA-1134 / JCM 13001 / Rf4</strain>
    </source>
</reference>
<comment type="function">
    <text evidence="1">Produces ATP from ADP in the presence of a proton gradient across the membrane. The V-type beta chain is a regulatory subunit.</text>
</comment>
<comment type="similarity">
    <text evidence="1">Belongs to the ATPase alpha/beta chains family.</text>
</comment>
<gene>
    <name evidence="1" type="primary">atpB</name>
    <name type="ordered locus">Gura_0424</name>
</gene>
<dbReference type="EMBL" id="CP000698">
    <property type="protein sequence ID" value="ABQ24640.1"/>
    <property type="molecule type" value="Genomic_DNA"/>
</dbReference>
<dbReference type="RefSeq" id="WP_011937366.1">
    <property type="nucleotide sequence ID" value="NC_009483.1"/>
</dbReference>
<dbReference type="SMR" id="A5GCR3"/>
<dbReference type="STRING" id="351605.Gura_0424"/>
<dbReference type="KEGG" id="gur:Gura_0424"/>
<dbReference type="HOGENOM" id="CLU_022916_0_0_7"/>
<dbReference type="OrthoDB" id="9801639at2"/>
<dbReference type="Proteomes" id="UP000006695">
    <property type="component" value="Chromosome"/>
</dbReference>
<dbReference type="GO" id="GO:0045259">
    <property type="term" value="C:proton-transporting ATP synthase complex"/>
    <property type="evidence" value="ECO:0007669"/>
    <property type="project" value="UniProtKB-ARBA"/>
</dbReference>
<dbReference type="GO" id="GO:0005524">
    <property type="term" value="F:ATP binding"/>
    <property type="evidence" value="ECO:0007669"/>
    <property type="project" value="UniProtKB-UniRule"/>
</dbReference>
<dbReference type="GO" id="GO:0046933">
    <property type="term" value="F:proton-transporting ATP synthase activity, rotational mechanism"/>
    <property type="evidence" value="ECO:0007669"/>
    <property type="project" value="UniProtKB-UniRule"/>
</dbReference>
<dbReference type="GO" id="GO:0042777">
    <property type="term" value="P:proton motive force-driven plasma membrane ATP synthesis"/>
    <property type="evidence" value="ECO:0007669"/>
    <property type="project" value="UniProtKB-UniRule"/>
</dbReference>
<dbReference type="CDD" id="cd18118">
    <property type="entry name" value="ATP-synt_V_A-type_beta_N"/>
    <property type="match status" value="1"/>
</dbReference>
<dbReference type="CDD" id="cd01135">
    <property type="entry name" value="V_A-ATPase_B"/>
    <property type="match status" value="1"/>
</dbReference>
<dbReference type="Gene3D" id="3.40.50.12240">
    <property type="match status" value="1"/>
</dbReference>
<dbReference type="HAMAP" id="MF_00310">
    <property type="entry name" value="ATP_synth_B_arch"/>
    <property type="match status" value="1"/>
</dbReference>
<dbReference type="InterPro" id="IPR055190">
    <property type="entry name" value="ATP-synt_VA_C"/>
</dbReference>
<dbReference type="InterPro" id="IPR020003">
    <property type="entry name" value="ATPase_a/bsu_AS"/>
</dbReference>
<dbReference type="InterPro" id="IPR004100">
    <property type="entry name" value="ATPase_F1/V1/A1_a/bsu_N"/>
</dbReference>
<dbReference type="InterPro" id="IPR036121">
    <property type="entry name" value="ATPase_F1/V1/A1_a/bsu_N_sf"/>
</dbReference>
<dbReference type="InterPro" id="IPR000194">
    <property type="entry name" value="ATPase_F1/V1/A1_a/bsu_nucl-bd"/>
</dbReference>
<dbReference type="InterPro" id="IPR027417">
    <property type="entry name" value="P-loop_NTPase"/>
</dbReference>
<dbReference type="InterPro" id="IPR022879">
    <property type="entry name" value="V-ATPase_su_B/beta"/>
</dbReference>
<dbReference type="NCBIfam" id="NF003235">
    <property type="entry name" value="PRK04196.1"/>
    <property type="match status" value="1"/>
</dbReference>
<dbReference type="PANTHER" id="PTHR43389">
    <property type="entry name" value="V-TYPE PROTON ATPASE SUBUNIT B"/>
    <property type="match status" value="1"/>
</dbReference>
<dbReference type="PANTHER" id="PTHR43389:SF4">
    <property type="entry name" value="V-TYPE PROTON ATPASE SUBUNIT B"/>
    <property type="match status" value="1"/>
</dbReference>
<dbReference type="Pfam" id="PF00006">
    <property type="entry name" value="ATP-synt_ab"/>
    <property type="match status" value="1"/>
</dbReference>
<dbReference type="Pfam" id="PF02874">
    <property type="entry name" value="ATP-synt_ab_N"/>
    <property type="match status" value="1"/>
</dbReference>
<dbReference type="Pfam" id="PF22919">
    <property type="entry name" value="ATP-synt_VA_C"/>
    <property type="match status" value="1"/>
</dbReference>
<dbReference type="SUPFAM" id="SSF50615">
    <property type="entry name" value="N-terminal domain of alpha and beta subunits of F1 ATP synthase"/>
    <property type="match status" value="1"/>
</dbReference>
<dbReference type="SUPFAM" id="SSF52540">
    <property type="entry name" value="P-loop containing nucleoside triphosphate hydrolases"/>
    <property type="match status" value="1"/>
</dbReference>
<dbReference type="PROSITE" id="PS00152">
    <property type="entry name" value="ATPASE_ALPHA_BETA"/>
    <property type="match status" value="1"/>
</dbReference>
<accession>A5GCR3</accession>
<feature type="chain" id="PRO_1000079067" description="V-type ATP synthase beta chain">
    <location>
        <begin position="1"/>
        <end position="440"/>
    </location>
</feature>